<dbReference type="EC" id="5.3.1.1" evidence="1"/>
<dbReference type="EMBL" id="CP000949">
    <property type="protein sequence ID" value="ACA71222.1"/>
    <property type="molecule type" value="Genomic_DNA"/>
</dbReference>
<dbReference type="SMR" id="B1J266"/>
<dbReference type="STRING" id="390235.PputW619_0717"/>
<dbReference type="KEGG" id="ppw:PputW619_0717"/>
<dbReference type="eggNOG" id="COG0149">
    <property type="taxonomic scope" value="Bacteria"/>
</dbReference>
<dbReference type="HOGENOM" id="CLU_024251_2_1_6"/>
<dbReference type="OrthoDB" id="9809429at2"/>
<dbReference type="UniPathway" id="UPA00109">
    <property type="reaction ID" value="UER00189"/>
</dbReference>
<dbReference type="UniPathway" id="UPA00138"/>
<dbReference type="GO" id="GO:0005829">
    <property type="term" value="C:cytosol"/>
    <property type="evidence" value="ECO:0007669"/>
    <property type="project" value="TreeGrafter"/>
</dbReference>
<dbReference type="GO" id="GO:0004807">
    <property type="term" value="F:triose-phosphate isomerase activity"/>
    <property type="evidence" value="ECO:0007669"/>
    <property type="project" value="UniProtKB-UniRule"/>
</dbReference>
<dbReference type="GO" id="GO:0006094">
    <property type="term" value="P:gluconeogenesis"/>
    <property type="evidence" value="ECO:0007669"/>
    <property type="project" value="UniProtKB-UniRule"/>
</dbReference>
<dbReference type="GO" id="GO:0046166">
    <property type="term" value="P:glyceraldehyde-3-phosphate biosynthetic process"/>
    <property type="evidence" value="ECO:0007669"/>
    <property type="project" value="TreeGrafter"/>
</dbReference>
<dbReference type="GO" id="GO:0019563">
    <property type="term" value="P:glycerol catabolic process"/>
    <property type="evidence" value="ECO:0007669"/>
    <property type="project" value="TreeGrafter"/>
</dbReference>
<dbReference type="GO" id="GO:0006096">
    <property type="term" value="P:glycolytic process"/>
    <property type="evidence" value="ECO:0007669"/>
    <property type="project" value="UniProtKB-UniRule"/>
</dbReference>
<dbReference type="CDD" id="cd00311">
    <property type="entry name" value="TIM"/>
    <property type="match status" value="1"/>
</dbReference>
<dbReference type="FunFam" id="3.20.20.70:FF:000016">
    <property type="entry name" value="Triosephosphate isomerase"/>
    <property type="match status" value="1"/>
</dbReference>
<dbReference type="Gene3D" id="3.20.20.70">
    <property type="entry name" value="Aldolase class I"/>
    <property type="match status" value="1"/>
</dbReference>
<dbReference type="HAMAP" id="MF_00147_B">
    <property type="entry name" value="TIM_B"/>
    <property type="match status" value="1"/>
</dbReference>
<dbReference type="InterPro" id="IPR013785">
    <property type="entry name" value="Aldolase_TIM"/>
</dbReference>
<dbReference type="InterPro" id="IPR035990">
    <property type="entry name" value="TIM_sf"/>
</dbReference>
<dbReference type="InterPro" id="IPR022896">
    <property type="entry name" value="TrioseP_Isoase_bac/euk"/>
</dbReference>
<dbReference type="InterPro" id="IPR000652">
    <property type="entry name" value="Triosephosphate_isomerase"/>
</dbReference>
<dbReference type="InterPro" id="IPR020861">
    <property type="entry name" value="Triosephosphate_isomerase_AS"/>
</dbReference>
<dbReference type="NCBIfam" id="TIGR00419">
    <property type="entry name" value="tim"/>
    <property type="match status" value="1"/>
</dbReference>
<dbReference type="PANTHER" id="PTHR21139">
    <property type="entry name" value="TRIOSEPHOSPHATE ISOMERASE"/>
    <property type="match status" value="1"/>
</dbReference>
<dbReference type="PANTHER" id="PTHR21139:SF42">
    <property type="entry name" value="TRIOSEPHOSPHATE ISOMERASE"/>
    <property type="match status" value="1"/>
</dbReference>
<dbReference type="Pfam" id="PF00121">
    <property type="entry name" value="TIM"/>
    <property type="match status" value="1"/>
</dbReference>
<dbReference type="SUPFAM" id="SSF51351">
    <property type="entry name" value="Triosephosphate isomerase (TIM)"/>
    <property type="match status" value="1"/>
</dbReference>
<dbReference type="PROSITE" id="PS00171">
    <property type="entry name" value="TIM_1"/>
    <property type="match status" value="1"/>
</dbReference>
<dbReference type="PROSITE" id="PS51440">
    <property type="entry name" value="TIM_2"/>
    <property type="match status" value="1"/>
</dbReference>
<gene>
    <name evidence="1" type="primary">tpiA</name>
    <name type="ordered locus">PputW619_0717</name>
</gene>
<keyword id="KW-0963">Cytoplasm</keyword>
<keyword id="KW-0312">Gluconeogenesis</keyword>
<keyword id="KW-0324">Glycolysis</keyword>
<keyword id="KW-0413">Isomerase</keyword>
<comment type="function">
    <text evidence="1">Involved in the gluconeogenesis. Catalyzes stereospecifically the conversion of dihydroxyacetone phosphate (DHAP) to D-glyceraldehyde-3-phosphate (G3P).</text>
</comment>
<comment type="catalytic activity">
    <reaction evidence="1">
        <text>D-glyceraldehyde 3-phosphate = dihydroxyacetone phosphate</text>
        <dbReference type="Rhea" id="RHEA:18585"/>
        <dbReference type="ChEBI" id="CHEBI:57642"/>
        <dbReference type="ChEBI" id="CHEBI:59776"/>
        <dbReference type="EC" id="5.3.1.1"/>
    </reaction>
</comment>
<comment type="pathway">
    <text evidence="1">Carbohydrate biosynthesis; gluconeogenesis.</text>
</comment>
<comment type="pathway">
    <text evidence="1">Carbohydrate degradation; glycolysis; D-glyceraldehyde 3-phosphate from glycerone phosphate: step 1/1.</text>
</comment>
<comment type="subunit">
    <text evidence="1">Homodimer.</text>
</comment>
<comment type="subcellular location">
    <subcellularLocation>
        <location evidence="1">Cytoplasm</location>
    </subcellularLocation>
</comment>
<comment type="similarity">
    <text evidence="1">Belongs to the triosephosphate isomerase family.</text>
</comment>
<reference key="1">
    <citation type="submission" date="2008-02" db="EMBL/GenBank/DDBJ databases">
        <title>Complete sequence of Pseudomonas putida W619.</title>
        <authorList>
            <person name="Copeland A."/>
            <person name="Lucas S."/>
            <person name="Lapidus A."/>
            <person name="Barry K."/>
            <person name="Detter J.C."/>
            <person name="Glavina del Rio T."/>
            <person name="Dalin E."/>
            <person name="Tice H."/>
            <person name="Pitluck S."/>
            <person name="Chain P."/>
            <person name="Malfatti S."/>
            <person name="Shin M."/>
            <person name="Vergez L."/>
            <person name="Schmutz J."/>
            <person name="Larimer F."/>
            <person name="Land M."/>
            <person name="Hauser L."/>
            <person name="Kyrpides N."/>
            <person name="Kim E."/>
            <person name="Taghavi S."/>
            <person name="Vangronsveld D."/>
            <person name="van der Lelie D."/>
            <person name="Richardson P."/>
        </authorList>
    </citation>
    <scope>NUCLEOTIDE SEQUENCE [LARGE SCALE GENOMIC DNA]</scope>
    <source>
        <strain>W619</strain>
    </source>
</reference>
<protein>
    <recommendedName>
        <fullName evidence="1">Triosephosphate isomerase</fullName>
        <shortName evidence="1">TIM</shortName>
        <shortName evidence="1">TPI</shortName>
        <ecNumber evidence="1">5.3.1.1</ecNumber>
    </recommendedName>
    <alternativeName>
        <fullName evidence="1">Triose-phosphate isomerase</fullName>
    </alternativeName>
</protein>
<feature type="chain" id="PRO_1000096524" description="Triosephosphate isomerase">
    <location>
        <begin position="1"/>
        <end position="251"/>
    </location>
</feature>
<feature type="active site" description="Electrophile" evidence="1">
    <location>
        <position position="95"/>
    </location>
</feature>
<feature type="active site" description="Proton acceptor" evidence="1">
    <location>
        <position position="167"/>
    </location>
</feature>
<feature type="binding site" evidence="1">
    <location>
        <begin position="9"/>
        <end position="11"/>
    </location>
    <ligand>
        <name>substrate</name>
    </ligand>
</feature>
<feature type="binding site" evidence="1">
    <location>
        <position position="173"/>
    </location>
    <ligand>
        <name>substrate</name>
    </ligand>
</feature>
<feature type="binding site" evidence="1">
    <location>
        <position position="212"/>
    </location>
    <ligand>
        <name>substrate</name>
    </ligand>
</feature>
<feature type="binding site" evidence="1">
    <location>
        <begin position="233"/>
        <end position="234"/>
    </location>
    <ligand>
        <name>substrate</name>
    </ligand>
</feature>
<evidence type="ECO:0000255" key="1">
    <source>
        <dbReference type="HAMAP-Rule" id="MF_00147"/>
    </source>
</evidence>
<name>TPIS_PSEPW</name>
<organism>
    <name type="scientific">Pseudomonas putida (strain W619)</name>
    <dbReference type="NCBI Taxonomy" id="390235"/>
    <lineage>
        <taxon>Bacteria</taxon>
        <taxon>Pseudomonadati</taxon>
        <taxon>Pseudomonadota</taxon>
        <taxon>Gammaproteobacteria</taxon>
        <taxon>Pseudomonadales</taxon>
        <taxon>Pseudomonadaceae</taxon>
        <taxon>Pseudomonas</taxon>
    </lineage>
</organism>
<sequence>MRRPMVAGNWKMHGTRASVAELTQGLGNMLIPEGIEVAVFPPALFINEVIDGLKGKGITVGAQNSAVQPEQGALTGEVAPSQLAEVGCKFVLIGHSERRQVIGESEEVLNRKFAAAQKSGLTPVLCIGETLEEREAGKTLEVVGRQLSSVIDAFGIAAFANAVIAYEPVWAIGTGLTASPQQAQDVHAAIRKQLAAKDAEVAQNVQLLYGGSVKAANAAELFGMPDIDGGLIGGASLNADEFGAICRAAGN</sequence>
<accession>B1J266</accession>
<proteinExistence type="inferred from homology"/>